<protein>
    <recommendedName>
        <fullName evidence="1">Large ribosomal subunit protein uL13</fullName>
    </recommendedName>
    <alternativeName>
        <fullName evidence="2">50S ribosomal protein L13</fullName>
    </alternativeName>
</protein>
<comment type="function">
    <text evidence="1">This protein is one of the early assembly proteins of the 50S ribosomal subunit, although it is not seen to bind rRNA by itself. It is important during the early stages of 50S assembly.</text>
</comment>
<comment type="subunit">
    <text evidence="1">Part of the 50S ribosomal subunit.</text>
</comment>
<comment type="similarity">
    <text evidence="1">Belongs to the universal ribosomal protein uL13 family.</text>
</comment>
<dbReference type="EMBL" id="CP001661">
    <property type="protein sequence ID" value="ACT19374.1"/>
    <property type="molecule type" value="Genomic_DNA"/>
</dbReference>
<dbReference type="SMR" id="C6E4S8"/>
<dbReference type="STRING" id="443144.GM21_3349"/>
<dbReference type="KEGG" id="gem:GM21_3349"/>
<dbReference type="eggNOG" id="COG0102">
    <property type="taxonomic scope" value="Bacteria"/>
</dbReference>
<dbReference type="HOGENOM" id="CLU_082184_2_2_7"/>
<dbReference type="OrthoDB" id="9801330at2"/>
<dbReference type="GO" id="GO:0022625">
    <property type="term" value="C:cytosolic large ribosomal subunit"/>
    <property type="evidence" value="ECO:0007669"/>
    <property type="project" value="TreeGrafter"/>
</dbReference>
<dbReference type="GO" id="GO:0003729">
    <property type="term" value="F:mRNA binding"/>
    <property type="evidence" value="ECO:0007669"/>
    <property type="project" value="TreeGrafter"/>
</dbReference>
<dbReference type="GO" id="GO:0003735">
    <property type="term" value="F:structural constituent of ribosome"/>
    <property type="evidence" value="ECO:0007669"/>
    <property type="project" value="InterPro"/>
</dbReference>
<dbReference type="GO" id="GO:0017148">
    <property type="term" value="P:negative regulation of translation"/>
    <property type="evidence" value="ECO:0007669"/>
    <property type="project" value="TreeGrafter"/>
</dbReference>
<dbReference type="GO" id="GO:0006412">
    <property type="term" value="P:translation"/>
    <property type="evidence" value="ECO:0007669"/>
    <property type="project" value="UniProtKB-UniRule"/>
</dbReference>
<dbReference type="CDD" id="cd00392">
    <property type="entry name" value="Ribosomal_L13"/>
    <property type="match status" value="1"/>
</dbReference>
<dbReference type="FunFam" id="3.90.1180.10:FF:000001">
    <property type="entry name" value="50S ribosomal protein L13"/>
    <property type="match status" value="1"/>
</dbReference>
<dbReference type="Gene3D" id="3.90.1180.10">
    <property type="entry name" value="Ribosomal protein L13"/>
    <property type="match status" value="1"/>
</dbReference>
<dbReference type="HAMAP" id="MF_01366">
    <property type="entry name" value="Ribosomal_uL13"/>
    <property type="match status" value="1"/>
</dbReference>
<dbReference type="InterPro" id="IPR005822">
    <property type="entry name" value="Ribosomal_uL13"/>
</dbReference>
<dbReference type="InterPro" id="IPR005823">
    <property type="entry name" value="Ribosomal_uL13_bac-type"/>
</dbReference>
<dbReference type="InterPro" id="IPR036899">
    <property type="entry name" value="Ribosomal_uL13_sf"/>
</dbReference>
<dbReference type="NCBIfam" id="TIGR01066">
    <property type="entry name" value="rplM_bact"/>
    <property type="match status" value="1"/>
</dbReference>
<dbReference type="PANTHER" id="PTHR11545:SF2">
    <property type="entry name" value="LARGE RIBOSOMAL SUBUNIT PROTEIN UL13M"/>
    <property type="match status" value="1"/>
</dbReference>
<dbReference type="PANTHER" id="PTHR11545">
    <property type="entry name" value="RIBOSOMAL PROTEIN L13"/>
    <property type="match status" value="1"/>
</dbReference>
<dbReference type="Pfam" id="PF00572">
    <property type="entry name" value="Ribosomal_L13"/>
    <property type="match status" value="1"/>
</dbReference>
<dbReference type="PIRSF" id="PIRSF002181">
    <property type="entry name" value="Ribosomal_L13"/>
    <property type="match status" value="1"/>
</dbReference>
<dbReference type="SUPFAM" id="SSF52161">
    <property type="entry name" value="Ribosomal protein L13"/>
    <property type="match status" value="1"/>
</dbReference>
<name>RL13_GEOSM</name>
<keyword id="KW-0687">Ribonucleoprotein</keyword>
<keyword id="KW-0689">Ribosomal protein</keyword>
<organism>
    <name type="scientific">Geobacter sp. (strain M21)</name>
    <dbReference type="NCBI Taxonomy" id="443144"/>
    <lineage>
        <taxon>Bacteria</taxon>
        <taxon>Pseudomonadati</taxon>
        <taxon>Thermodesulfobacteriota</taxon>
        <taxon>Desulfuromonadia</taxon>
        <taxon>Geobacterales</taxon>
        <taxon>Geobacteraceae</taxon>
        <taxon>Geobacter</taxon>
    </lineage>
</organism>
<proteinExistence type="inferred from homology"/>
<sequence length="142" mass="15748">MKTQVAKKEEVTRDWYLVDVDNKVLGRVATEIANVLRGKNKPTFTPSVDTGDFVIVVNAEKIALTGRKLADKVYYSHSSYPGGLKEITAGKLLDKKPEELLKKAVKGMLPKNKLARHMLKKLKIYSGGAHPHAAQNPKNLNI</sequence>
<accession>C6E4S8</accession>
<feature type="chain" id="PRO_1000214954" description="Large ribosomal subunit protein uL13">
    <location>
        <begin position="1"/>
        <end position="142"/>
    </location>
</feature>
<gene>
    <name evidence="1" type="primary">rplM</name>
    <name type="ordered locus">GM21_3349</name>
</gene>
<evidence type="ECO:0000255" key="1">
    <source>
        <dbReference type="HAMAP-Rule" id="MF_01366"/>
    </source>
</evidence>
<evidence type="ECO:0000305" key="2"/>
<reference key="1">
    <citation type="submission" date="2009-07" db="EMBL/GenBank/DDBJ databases">
        <title>Complete sequence of Geobacter sp. M21.</title>
        <authorList>
            <consortium name="US DOE Joint Genome Institute"/>
            <person name="Lucas S."/>
            <person name="Copeland A."/>
            <person name="Lapidus A."/>
            <person name="Glavina del Rio T."/>
            <person name="Dalin E."/>
            <person name="Tice H."/>
            <person name="Bruce D."/>
            <person name="Goodwin L."/>
            <person name="Pitluck S."/>
            <person name="Saunders E."/>
            <person name="Brettin T."/>
            <person name="Detter J.C."/>
            <person name="Han C."/>
            <person name="Larimer F."/>
            <person name="Land M."/>
            <person name="Hauser L."/>
            <person name="Kyrpides N."/>
            <person name="Ovchinnikova G."/>
            <person name="Lovley D."/>
        </authorList>
    </citation>
    <scope>NUCLEOTIDE SEQUENCE [LARGE SCALE GENOMIC DNA]</scope>
    <source>
        <strain>M21</strain>
    </source>
</reference>